<accession>P16132</accession>
<feature type="transit peptide" description="Chloroplast" evidence="1">
    <location>
        <begin position="1"/>
        <end position="41"/>
    </location>
</feature>
<feature type="chain" id="PRO_0000031450" description="Ribulose bisphosphate carboxylase small subunit, chloroplastic 4" evidence="1">
    <location>
        <begin position="42"/>
        <end position="182"/>
    </location>
</feature>
<comment type="function">
    <text evidence="1">RuBisCO catalyzes two reactions: the carboxylation of D-ribulose 1,5-bisphosphate, the primary event in carbon dioxide fixation, as well as the oxidative fragmentation of the pentose substrate. Both reactions occur simultaneously and in competition at the same active site. Although the small subunit is not catalytic it is essential for maximal activity.</text>
</comment>
<comment type="subunit">
    <text evidence="1">Heterohexadecamer of 8 large and 8 small subunits.</text>
</comment>
<comment type="subcellular location">
    <subcellularLocation>
        <location evidence="1">Plastid</location>
        <location evidence="1">Chloroplast</location>
    </subcellularLocation>
</comment>
<comment type="miscellaneous">
    <text evidence="1">The basic functional RuBisCO is composed of a large chain homodimer in a 'head-to-tail' conformation. In form I RuBisCO this homodimer is arranged in a barrel-like tetramer with the small subunits forming a tetrameric 'cap' on each end of the 'barrel'.</text>
</comment>
<comment type="similarity">
    <text evidence="1">Belongs to the RuBisCO small chain family.</text>
</comment>
<name>RBS4_ACEPE</name>
<sequence>MAATMMNKTVVLSKGCTKPSAVPKVSINRKGFLNTAMNKKREMMVWQPFNNKMFETFSYLPPLTDEQISKQVDYILANSWTPCLEFAASDQAYAGNENCIRMGPVASTYQDNRYWTMWKLPMFGCTDGSQVLSEIQACTKAFPDAYIRLVCFDANRQVQISGFLVHRPPSATDYRLPADRQV</sequence>
<reference key="1">
    <citation type="journal article" date="1989" name="Mol. Gen. Genet.">
        <title>Strong homology between the small subunit of ribulose-1,5-bisphosphate carboxylase/oxygenase of two species of Acetabularia and the occurrence of unusual codon usage.</title>
        <authorList>
            <person name="Schneider S.U."/>
            <person name="Leible M.B."/>
            <person name="Yang X.P."/>
        </authorList>
    </citation>
    <scope>NUCLEOTIDE SEQUENCE [MRNA]</scope>
    <source>
        <strain>17</strain>
    </source>
</reference>
<keyword id="KW-0113">Calvin cycle</keyword>
<keyword id="KW-0120">Carbon dioxide fixation</keyword>
<keyword id="KW-0150">Chloroplast</keyword>
<keyword id="KW-0601">Photorespiration</keyword>
<keyword id="KW-0602">Photosynthesis</keyword>
<keyword id="KW-0934">Plastid</keyword>
<keyword id="KW-0809">Transit peptide</keyword>
<protein>
    <recommendedName>
        <fullName evidence="1">Ribulose bisphosphate carboxylase small subunit, chloroplastic 4</fullName>
        <shortName evidence="1">RuBisCO small subunit 4</shortName>
    </recommendedName>
</protein>
<evidence type="ECO:0000255" key="1">
    <source>
        <dbReference type="HAMAP-Rule" id="MF_00860"/>
    </source>
</evidence>
<proteinExistence type="evidence at transcript level"/>
<gene>
    <name evidence="1" type="primary">RBCS4</name>
    <name type="synonym">RBCS-4</name>
</gene>
<organism>
    <name type="scientific">Acetabularia peniculus</name>
    <name type="common">Green alga</name>
    <name type="synonym">Polyphysa peniculus</name>
    <dbReference type="NCBI Taxonomy" id="35862"/>
    <lineage>
        <taxon>Eukaryota</taxon>
        <taxon>Viridiplantae</taxon>
        <taxon>Chlorophyta</taxon>
        <taxon>Ulvophyceae</taxon>
        <taxon>TCBD clade</taxon>
        <taxon>Dasycladales</taxon>
        <taxon>Polyphysaceae</taxon>
        <taxon>Acetabularia</taxon>
    </lineage>
</organism>
<dbReference type="EMBL" id="X51809">
    <property type="protein sequence ID" value="CAA36106.1"/>
    <property type="molecule type" value="mRNA"/>
</dbReference>
<dbReference type="PIR" id="S05353">
    <property type="entry name" value="RKJK4C"/>
</dbReference>
<dbReference type="SMR" id="P16132"/>
<dbReference type="GO" id="GO:0009507">
    <property type="term" value="C:chloroplast"/>
    <property type="evidence" value="ECO:0007669"/>
    <property type="project" value="UniProtKB-SubCell"/>
</dbReference>
<dbReference type="GO" id="GO:0016984">
    <property type="term" value="F:ribulose-bisphosphate carboxylase activity"/>
    <property type="evidence" value="ECO:0007669"/>
    <property type="project" value="UniProtKB-UniRule"/>
</dbReference>
<dbReference type="GO" id="GO:0009853">
    <property type="term" value="P:photorespiration"/>
    <property type="evidence" value="ECO:0007669"/>
    <property type="project" value="UniProtKB-KW"/>
</dbReference>
<dbReference type="GO" id="GO:0019253">
    <property type="term" value="P:reductive pentose-phosphate cycle"/>
    <property type="evidence" value="ECO:0007669"/>
    <property type="project" value="UniProtKB-UniRule"/>
</dbReference>
<dbReference type="CDD" id="cd03527">
    <property type="entry name" value="RuBisCO_small"/>
    <property type="match status" value="1"/>
</dbReference>
<dbReference type="FunFam" id="3.30.190.10:FF:000001">
    <property type="entry name" value="Ribulose bisphosphate carboxylase small chain, chloroplastic"/>
    <property type="match status" value="1"/>
</dbReference>
<dbReference type="Gene3D" id="3.30.190.10">
    <property type="entry name" value="Ribulose bisphosphate carboxylase, small subunit"/>
    <property type="match status" value="1"/>
</dbReference>
<dbReference type="HAMAP" id="MF_00859">
    <property type="entry name" value="RuBisCO_S_bact"/>
    <property type="match status" value="1"/>
</dbReference>
<dbReference type="InterPro" id="IPR024681">
    <property type="entry name" value="RuBisCO_ssu"/>
</dbReference>
<dbReference type="InterPro" id="IPR000894">
    <property type="entry name" value="RuBisCO_ssu_dom"/>
</dbReference>
<dbReference type="InterPro" id="IPR036385">
    <property type="entry name" value="RuBisCO_ssu_sf"/>
</dbReference>
<dbReference type="PANTHER" id="PTHR31262">
    <property type="entry name" value="RIBULOSE BISPHOSPHATE CARBOXYLASE SMALL CHAIN 1, CHLOROPLASTIC"/>
    <property type="match status" value="1"/>
</dbReference>
<dbReference type="PANTHER" id="PTHR31262:SF0">
    <property type="entry name" value="RIBULOSE BISPHOSPHATE CARBOXYLASE SMALL SUBUNIT, CHLOROPLASTIC 1"/>
    <property type="match status" value="1"/>
</dbReference>
<dbReference type="Pfam" id="PF00101">
    <property type="entry name" value="RuBisCO_small"/>
    <property type="match status" value="1"/>
</dbReference>
<dbReference type="PRINTS" id="PR00152">
    <property type="entry name" value="RUBISCOSMALL"/>
</dbReference>
<dbReference type="SMART" id="SM00961">
    <property type="entry name" value="RuBisCO_small"/>
    <property type="match status" value="1"/>
</dbReference>
<dbReference type="SUPFAM" id="SSF55239">
    <property type="entry name" value="RuBisCO, small subunit"/>
    <property type="match status" value="1"/>
</dbReference>